<reference key="1">
    <citation type="journal article" date="1991" name="Peptides">
        <title>Isolation, structural characterization and pharmacological activity of dog neuromedin U.</title>
        <authorList>
            <person name="O'Harte F."/>
            <person name="Bockman C.S."/>
            <person name="Abel P.W."/>
            <person name="Conlon J.M."/>
        </authorList>
    </citation>
    <scope>PROTEIN SEQUENCE</scope>
    <scope>PYROGLUTAMATE FORMATION AT GLN-18</scope>
    <scope>AMIDATION AT ASN-25</scope>
    <source>
        <tissue>Small intestine</tissue>
    </source>
</reference>
<protein>
    <recommendedName>
        <fullName>Neuromedin-U-25</fullName>
        <shortName>NmU-25</shortName>
    </recommendedName>
    <component>
        <recommendedName>
            <fullName>Neuromedin-U-8</fullName>
            <shortName>NmU-8</shortName>
        </recommendedName>
    </component>
</protein>
<accession>P34962</accession>
<organism>
    <name type="scientific">Canis lupus familiaris</name>
    <name type="common">Dog</name>
    <name type="synonym">Canis familiaris</name>
    <dbReference type="NCBI Taxonomy" id="9615"/>
    <lineage>
        <taxon>Eukaryota</taxon>
        <taxon>Metazoa</taxon>
        <taxon>Chordata</taxon>
        <taxon>Craniata</taxon>
        <taxon>Vertebrata</taxon>
        <taxon>Euteleostomi</taxon>
        <taxon>Mammalia</taxon>
        <taxon>Eutheria</taxon>
        <taxon>Laurasiatheria</taxon>
        <taxon>Carnivora</taxon>
        <taxon>Caniformia</taxon>
        <taxon>Canidae</taxon>
        <taxon>Canis</taxon>
    </lineage>
</organism>
<proteinExistence type="evidence at protein level"/>
<comment type="function">
    <text>Stimulates uterine smooth muscle contraction and causes selective vasoconstriction.</text>
</comment>
<comment type="subcellular location">
    <subcellularLocation>
        <location>Secreted</location>
    </subcellularLocation>
</comment>
<comment type="similarity">
    <text evidence="2">Belongs to the NmU family.</text>
</comment>
<dbReference type="STRING" id="9615.ENSCAFP00000059647"/>
<dbReference type="PaxDb" id="9612-ENSCAFP00000039888"/>
<dbReference type="HOGENOM" id="CLU_221025_0_0_1"/>
<dbReference type="InParanoid" id="P34962"/>
<dbReference type="Proteomes" id="UP000002254">
    <property type="component" value="Unplaced"/>
</dbReference>
<dbReference type="Proteomes" id="UP000694429">
    <property type="component" value="Unplaced"/>
</dbReference>
<dbReference type="Proteomes" id="UP000694542">
    <property type="component" value="Unplaced"/>
</dbReference>
<dbReference type="Proteomes" id="UP000805418">
    <property type="component" value="Unplaced"/>
</dbReference>
<dbReference type="GO" id="GO:0005576">
    <property type="term" value="C:extracellular region"/>
    <property type="evidence" value="ECO:0007669"/>
    <property type="project" value="UniProtKB-SubCell"/>
</dbReference>
<dbReference type="GO" id="GO:0005179">
    <property type="term" value="F:hormone activity"/>
    <property type="evidence" value="ECO:0007669"/>
    <property type="project" value="UniProtKB-KW"/>
</dbReference>
<dbReference type="GO" id="GO:0006940">
    <property type="term" value="P:regulation of smooth muscle contraction"/>
    <property type="evidence" value="ECO:0007669"/>
    <property type="project" value="InterPro"/>
</dbReference>
<dbReference type="InterPro" id="IPR018070">
    <property type="entry name" value="Neuromedin-U_amidation-site"/>
</dbReference>
<dbReference type="InterPro" id="IPR008200">
    <property type="entry name" value="NMU_C"/>
</dbReference>
<dbReference type="Pfam" id="PF02070">
    <property type="entry name" value="NMU"/>
    <property type="match status" value="1"/>
</dbReference>
<dbReference type="SMART" id="SM00084">
    <property type="entry name" value="NMU"/>
    <property type="match status" value="1"/>
</dbReference>
<dbReference type="PROSITE" id="PS00967">
    <property type="entry name" value="NMU"/>
    <property type="match status" value="1"/>
</dbReference>
<feature type="peptide" id="PRO_0000019770" description="Neuromedin-U-25">
    <location>
        <begin position="1"/>
        <end position="25"/>
    </location>
</feature>
<feature type="peptide" id="PRO_0000019771" description="Neuromedin-U-8">
    <location>
        <begin position="18"/>
        <end position="25"/>
    </location>
</feature>
<feature type="modified residue" description="Pyrrolidone carboxylic acid" evidence="1">
    <location>
        <position position="18"/>
    </location>
</feature>
<feature type="modified residue" description="Asparagine amide" evidence="1">
    <location>
        <position position="25"/>
    </location>
</feature>
<keyword id="KW-0027">Amidation</keyword>
<keyword id="KW-0165">Cleavage on pair of basic residues</keyword>
<keyword id="KW-0903">Direct protein sequencing</keyword>
<keyword id="KW-0372">Hormone</keyword>
<keyword id="KW-0873">Pyrrolidone carboxylic acid</keyword>
<keyword id="KW-1185">Reference proteome</keyword>
<keyword id="KW-0964">Secreted</keyword>
<name>NMU_CANLF</name>
<evidence type="ECO:0000269" key="1">
    <source>
    </source>
</evidence>
<evidence type="ECO:0000305" key="2"/>
<gene>
    <name type="primary">NMU</name>
</gene>
<sequence>FRLDEEFQGPIASQVRRQFLFRPRN</sequence>